<protein>
    <recommendedName>
        <fullName>Uncharacterized HTH-type transcriptional regulator YtfH</fullName>
    </recommendedName>
</protein>
<gene>
    <name type="primary">ytfH</name>
    <name type="ordered locus">b4212</name>
    <name type="ordered locus">JW5747</name>
</gene>
<comment type="sequence caution" evidence="2">
    <conflict type="erroneous initiation">
        <sequence resource="EMBL-CDS" id="AAA97108"/>
    </conflict>
    <text>Extended N-terminus.</text>
</comment>
<proteinExistence type="predicted"/>
<accession>P0ACN2</accession>
<accession>P39316</accession>
<accession>Q2M693</accession>
<name>YTFH_ECOLI</name>
<evidence type="ECO:0000255" key="1">
    <source>
        <dbReference type="PROSITE-ProRule" id="PRU00435"/>
    </source>
</evidence>
<evidence type="ECO:0000305" key="2"/>
<organism>
    <name type="scientific">Escherichia coli (strain K12)</name>
    <dbReference type="NCBI Taxonomy" id="83333"/>
    <lineage>
        <taxon>Bacteria</taxon>
        <taxon>Pseudomonadati</taxon>
        <taxon>Pseudomonadota</taxon>
        <taxon>Gammaproteobacteria</taxon>
        <taxon>Enterobacterales</taxon>
        <taxon>Enterobacteriaceae</taxon>
        <taxon>Escherichia</taxon>
    </lineage>
</organism>
<dbReference type="EMBL" id="U14003">
    <property type="protein sequence ID" value="AAA97108.1"/>
    <property type="status" value="ALT_INIT"/>
    <property type="molecule type" value="Genomic_DNA"/>
</dbReference>
<dbReference type="EMBL" id="U00096">
    <property type="protein sequence ID" value="AAC77169.2"/>
    <property type="molecule type" value="Genomic_DNA"/>
</dbReference>
<dbReference type="EMBL" id="AP009048">
    <property type="protein sequence ID" value="BAE78213.1"/>
    <property type="molecule type" value="Genomic_DNA"/>
</dbReference>
<dbReference type="PIR" id="S56437">
    <property type="entry name" value="S56437"/>
</dbReference>
<dbReference type="RefSeq" id="NP_418633.4">
    <property type="nucleotide sequence ID" value="NC_000913.3"/>
</dbReference>
<dbReference type="RefSeq" id="WP_000084622.1">
    <property type="nucleotide sequence ID" value="NZ_STEB01000013.1"/>
</dbReference>
<dbReference type="SMR" id="P0ACN2"/>
<dbReference type="BioGRID" id="4263389">
    <property type="interactions" value="91"/>
</dbReference>
<dbReference type="DIP" id="DIP-12936N"/>
<dbReference type="FunCoup" id="P0ACN2">
    <property type="interactions" value="89"/>
</dbReference>
<dbReference type="STRING" id="511145.b4212"/>
<dbReference type="jPOST" id="P0ACN2"/>
<dbReference type="PaxDb" id="511145-b4212"/>
<dbReference type="EnsemblBacteria" id="AAC77169">
    <property type="protein sequence ID" value="AAC77169"/>
    <property type="gene ID" value="b4212"/>
</dbReference>
<dbReference type="GeneID" id="948730"/>
<dbReference type="KEGG" id="ecj:JW5747"/>
<dbReference type="KEGG" id="eco:b4212"/>
<dbReference type="PATRIC" id="fig|1411691.4.peg.2489"/>
<dbReference type="EchoBASE" id="EB2401"/>
<dbReference type="eggNOG" id="COG1733">
    <property type="taxonomic scope" value="Bacteria"/>
</dbReference>
<dbReference type="HOGENOM" id="CLU_111585_2_0_6"/>
<dbReference type="InParanoid" id="P0ACN2"/>
<dbReference type="OMA" id="WKCVILC"/>
<dbReference type="OrthoDB" id="9807069at2"/>
<dbReference type="PhylomeDB" id="P0ACN2"/>
<dbReference type="BioCyc" id="EcoCyc:G7869-MONOMER"/>
<dbReference type="PRO" id="PR:P0ACN2"/>
<dbReference type="Proteomes" id="UP000000625">
    <property type="component" value="Chromosome"/>
</dbReference>
<dbReference type="GO" id="GO:0032993">
    <property type="term" value="C:protein-DNA complex"/>
    <property type="evidence" value="ECO:0000318"/>
    <property type="project" value="GO_Central"/>
</dbReference>
<dbReference type="GO" id="GO:0003677">
    <property type="term" value="F:DNA binding"/>
    <property type="evidence" value="ECO:0007669"/>
    <property type="project" value="UniProtKB-KW"/>
</dbReference>
<dbReference type="GO" id="GO:0003700">
    <property type="term" value="F:DNA-binding transcription factor activity"/>
    <property type="evidence" value="ECO:0000318"/>
    <property type="project" value="GO_Central"/>
</dbReference>
<dbReference type="GO" id="GO:0006355">
    <property type="term" value="P:regulation of DNA-templated transcription"/>
    <property type="evidence" value="ECO:0000318"/>
    <property type="project" value="GO_Central"/>
</dbReference>
<dbReference type="Gene3D" id="1.10.10.10">
    <property type="entry name" value="Winged helix-like DNA-binding domain superfamily/Winged helix DNA-binding domain"/>
    <property type="match status" value="1"/>
</dbReference>
<dbReference type="InterPro" id="IPR002577">
    <property type="entry name" value="HTH_HxlR"/>
</dbReference>
<dbReference type="InterPro" id="IPR036388">
    <property type="entry name" value="WH-like_DNA-bd_sf"/>
</dbReference>
<dbReference type="InterPro" id="IPR036390">
    <property type="entry name" value="WH_DNA-bd_sf"/>
</dbReference>
<dbReference type="PANTHER" id="PTHR33204:SF37">
    <property type="entry name" value="HTH-TYPE TRANSCRIPTIONAL REGULATOR YODB"/>
    <property type="match status" value="1"/>
</dbReference>
<dbReference type="PANTHER" id="PTHR33204">
    <property type="entry name" value="TRANSCRIPTIONAL REGULATOR, MARR FAMILY"/>
    <property type="match status" value="1"/>
</dbReference>
<dbReference type="Pfam" id="PF01638">
    <property type="entry name" value="HxlR"/>
    <property type="match status" value="1"/>
</dbReference>
<dbReference type="SUPFAM" id="SSF46785">
    <property type="entry name" value="Winged helix' DNA-binding domain"/>
    <property type="match status" value="1"/>
</dbReference>
<dbReference type="PROSITE" id="PS51118">
    <property type="entry name" value="HTH_HXLR"/>
    <property type="match status" value="1"/>
</dbReference>
<feature type="chain" id="PRO_0000148881" description="Uncharacterized HTH-type transcriptional regulator YtfH">
    <location>
        <begin position="1"/>
        <end position="126"/>
    </location>
</feature>
<feature type="domain" description="HTH hxlR-type" evidence="1">
    <location>
        <begin position="20"/>
        <end position="118"/>
    </location>
</feature>
<reference key="1">
    <citation type="journal article" date="1995" name="Nucleic Acids Res.">
        <title>Analysis of the Escherichia coli genome VI: DNA sequence of the region from 92.8 through 100 minutes.</title>
        <authorList>
            <person name="Burland V.D."/>
            <person name="Plunkett G. III"/>
            <person name="Sofia H.J."/>
            <person name="Daniels D.L."/>
            <person name="Blattner F.R."/>
        </authorList>
    </citation>
    <scope>NUCLEOTIDE SEQUENCE [LARGE SCALE GENOMIC DNA]</scope>
    <source>
        <strain>K12 / MG1655 / ATCC 47076</strain>
    </source>
</reference>
<reference key="2">
    <citation type="journal article" date="1997" name="Science">
        <title>The complete genome sequence of Escherichia coli K-12.</title>
        <authorList>
            <person name="Blattner F.R."/>
            <person name="Plunkett G. III"/>
            <person name="Bloch C.A."/>
            <person name="Perna N.T."/>
            <person name="Burland V."/>
            <person name="Riley M."/>
            <person name="Collado-Vides J."/>
            <person name="Glasner J.D."/>
            <person name="Rode C.K."/>
            <person name="Mayhew G.F."/>
            <person name="Gregor J."/>
            <person name="Davis N.W."/>
            <person name="Kirkpatrick H.A."/>
            <person name="Goeden M.A."/>
            <person name="Rose D.J."/>
            <person name="Mau B."/>
            <person name="Shao Y."/>
        </authorList>
    </citation>
    <scope>NUCLEOTIDE SEQUENCE [LARGE SCALE GENOMIC DNA]</scope>
    <source>
        <strain>K12 / MG1655 / ATCC 47076</strain>
    </source>
</reference>
<reference key="3">
    <citation type="journal article" date="2006" name="Mol. Syst. Biol.">
        <title>Highly accurate genome sequences of Escherichia coli K-12 strains MG1655 and W3110.</title>
        <authorList>
            <person name="Hayashi K."/>
            <person name="Morooka N."/>
            <person name="Yamamoto Y."/>
            <person name="Fujita K."/>
            <person name="Isono K."/>
            <person name="Choi S."/>
            <person name="Ohtsubo E."/>
            <person name="Baba T."/>
            <person name="Wanner B.L."/>
            <person name="Mori H."/>
            <person name="Horiuchi T."/>
        </authorList>
    </citation>
    <scope>NUCLEOTIDE SEQUENCE [LARGE SCALE GENOMIC DNA]</scope>
    <source>
        <strain>K12 / W3110 / ATCC 27325 / DSM 5911</strain>
    </source>
</reference>
<keyword id="KW-0238">DNA-binding</keyword>
<keyword id="KW-1185">Reference proteome</keyword>
<keyword id="KW-0804">Transcription</keyword>
<keyword id="KW-0805">Transcription regulation</keyword>
<sequence>MSQVSLSQQLKEGNLFAEQCPSREVLKHVTSRWGVLILVALREGTHRFSDLRRKIGGVSEKMLAQSLQALEQDGFLNRIAYPVVPPHVEYSLTPLGEQVSEKVAALADWIELNLPEVLAVRDERAA</sequence>